<gene>
    <name type="primary">tax1bp1</name>
</gene>
<name>TAXB1_XENTR</name>
<comment type="function">
    <text>May have an anti-apoptotic activity.</text>
</comment>
<comment type="domain">
    <text evidence="1">The C-terminal UBZ-type zinc fingers function as ubiquitin-binding domains.</text>
</comment>
<protein>
    <recommendedName>
        <fullName>Tax1-binding protein 1 homolog</fullName>
    </recommendedName>
</protein>
<organism>
    <name type="scientific">Xenopus tropicalis</name>
    <name type="common">Western clawed frog</name>
    <name type="synonym">Silurana tropicalis</name>
    <dbReference type="NCBI Taxonomy" id="8364"/>
    <lineage>
        <taxon>Eukaryota</taxon>
        <taxon>Metazoa</taxon>
        <taxon>Chordata</taxon>
        <taxon>Craniata</taxon>
        <taxon>Vertebrata</taxon>
        <taxon>Euteleostomi</taxon>
        <taxon>Amphibia</taxon>
        <taxon>Batrachia</taxon>
        <taxon>Anura</taxon>
        <taxon>Pipoidea</taxon>
        <taxon>Pipidae</taxon>
        <taxon>Xenopodinae</taxon>
        <taxon>Xenopus</taxon>
        <taxon>Silurana</taxon>
    </lineage>
</organism>
<dbReference type="EMBL" id="BC063916">
    <property type="protein sequence ID" value="AAH63916.1"/>
    <property type="molecule type" value="mRNA"/>
</dbReference>
<dbReference type="RefSeq" id="NP_989247.1">
    <property type="nucleotide sequence ID" value="NM_203916.1"/>
</dbReference>
<dbReference type="RefSeq" id="XP_031759157.1">
    <property type="nucleotide sequence ID" value="XM_031903297.1"/>
</dbReference>
<dbReference type="SMR" id="Q6P3P1"/>
<dbReference type="FunCoup" id="Q6P3P1">
    <property type="interactions" value="1220"/>
</dbReference>
<dbReference type="STRING" id="8364.ENSXETP00000023519"/>
<dbReference type="PaxDb" id="8364-ENSXETP00000001664"/>
<dbReference type="DNASU" id="394857"/>
<dbReference type="GeneID" id="394857"/>
<dbReference type="KEGG" id="xtr:394857"/>
<dbReference type="AGR" id="Xenbase:XB-GENE-492305"/>
<dbReference type="CTD" id="8887"/>
<dbReference type="Xenbase" id="XB-GENE-492305">
    <property type="gene designation" value="tax1bp1"/>
</dbReference>
<dbReference type="eggNOG" id="ENOG502QQ1D">
    <property type="taxonomic scope" value="Eukaryota"/>
</dbReference>
<dbReference type="InParanoid" id="Q6P3P1"/>
<dbReference type="OMA" id="NKTSGDQ"/>
<dbReference type="OrthoDB" id="10015001at2759"/>
<dbReference type="Proteomes" id="UP000008143">
    <property type="component" value="Chromosome 6"/>
</dbReference>
<dbReference type="GO" id="GO:0008270">
    <property type="term" value="F:zinc ion binding"/>
    <property type="evidence" value="ECO:0007669"/>
    <property type="project" value="UniProtKB-KW"/>
</dbReference>
<dbReference type="GO" id="GO:0006915">
    <property type="term" value="P:apoptotic process"/>
    <property type="evidence" value="ECO:0007669"/>
    <property type="project" value="UniProtKB-KW"/>
</dbReference>
<dbReference type="CDD" id="cd21969">
    <property type="entry name" value="Zn-C2H2_TAX1BP1_rpt1"/>
    <property type="match status" value="1"/>
</dbReference>
<dbReference type="CDD" id="cd21970">
    <property type="entry name" value="Zn-C2H2_TAX1BP1_rpt2"/>
    <property type="match status" value="1"/>
</dbReference>
<dbReference type="FunFam" id="2.60.40.2840:FF:000002">
    <property type="entry name" value="Tax1-binding protein 1 isoform 2"/>
    <property type="match status" value="1"/>
</dbReference>
<dbReference type="Gene3D" id="2.60.40.2840">
    <property type="match status" value="1"/>
</dbReference>
<dbReference type="Gene3D" id="6.20.250.40">
    <property type="match status" value="1"/>
</dbReference>
<dbReference type="InterPro" id="IPR012852">
    <property type="entry name" value="CALCOCO1-like"/>
</dbReference>
<dbReference type="InterPro" id="IPR041641">
    <property type="entry name" value="CALCOCO1/2_Zn_UBZ1"/>
</dbReference>
<dbReference type="InterPro" id="IPR041611">
    <property type="entry name" value="SKICH"/>
</dbReference>
<dbReference type="InterPro" id="IPR051002">
    <property type="entry name" value="UBA_autophagy_assoc_protein"/>
</dbReference>
<dbReference type="PANTHER" id="PTHR31915">
    <property type="entry name" value="SKICH DOMAIN-CONTAINING PROTEIN"/>
    <property type="match status" value="1"/>
</dbReference>
<dbReference type="PANTHER" id="PTHR31915:SF8">
    <property type="entry name" value="TAX1-BINDING PROTEIN 1"/>
    <property type="match status" value="1"/>
</dbReference>
<dbReference type="Pfam" id="PF07888">
    <property type="entry name" value="CALCOCO1"/>
    <property type="match status" value="1"/>
</dbReference>
<dbReference type="Pfam" id="PF17751">
    <property type="entry name" value="SKICH"/>
    <property type="match status" value="1"/>
</dbReference>
<dbReference type="Pfam" id="PF18112">
    <property type="entry name" value="Zn-C2H2_12"/>
    <property type="match status" value="2"/>
</dbReference>
<dbReference type="PROSITE" id="PS51905">
    <property type="entry name" value="ZF_UBZ1"/>
    <property type="match status" value="2"/>
</dbReference>
<keyword id="KW-0053">Apoptosis</keyword>
<keyword id="KW-0175">Coiled coil</keyword>
<keyword id="KW-0479">Metal-binding</keyword>
<keyword id="KW-1185">Reference proteome</keyword>
<keyword id="KW-0677">Repeat</keyword>
<keyword id="KW-0862">Zinc</keyword>
<keyword id="KW-0863">Zinc-finger</keyword>
<sequence>MSALQEIPSPISNMQTSNFAHVIFQNVAKSYLPNAPLECHYTLTQYIHPHPKDWVGIFKVGWSTPRDYFTFLWSLMPEKYVAESTCNCVLTFQGYYLPNDDGEFYQFCYVTHKGEIRGASTPFQFRASSPVDELLTMEDEGHSDMLVVTTKTGLLELKIEKTMKEKEELVKITTVLEKEVLQLREHVEGLESEFLREQKRSEQLSSEREELFNASEILRNESDEAKRKCKEMSAKIIQLEEDIMLVTQKAIAKETELDSLKDKLKKVVLEKDQLECQLKYEKDEKDLYKVHLKNTEIENTKLLTEVQTLKNLDTNKENLISHYKEELGKLQICLADKEKMNKELLQNSSNKEDIAFLKQQLRKLEDQHQASRQEVSLMSRELSEAVNKRDKTMADLHSARLDTDSVRMQLADALAQLSMRDEQQQKSNPFAKKDQGADNNRVEQELRKEVEDLKLRLQMAADHYKDKFKECQKLQKQVVKLTEQLKATENQQKERELFCATEAAAVTVMKQCTPPVSPFTSDSLPEFDIREQVREMSLEMAEKTEKYRKCKQMLAEEKARCSAYADDVAKMELKWKEQLKVNDSIKRQLIALDDQYKVQSAEKDREICDLSYSIETLRNEKAKMERFINDLEKKLEKQAGWAASNTQGLQFFNPYCDEHRLAPAIPAQQPLLQFGNPYASQETRDGADGAFNPDEVQGPPVRATSWGLEDKVVCSQPARNLSRPDGLEDPDENNAGLITKDEDDDDDDDNVNFEQTPDPTRIAMHDQSGFCFEAGYTMNKKCPLCPVSFPPNYDQGQFEAHVESHWKVCPMCNEQFPPDCDQQIFERHVQTHFDGSVLNFD</sequence>
<evidence type="ECO:0000250" key="1">
    <source>
        <dbReference type="UniProtKB" id="Q86VP1"/>
    </source>
</evidence>
<evidence type="ECO:0000255" key="2"/>
<evidence type="ECO:0000255" key="3">
    <source>
        <dbReference type="PROSITE-ProRule" id="PRU01253"/>
    </source>
</evidence>
<evidence type="ECO:0000256" key="4">
    <source>
        <dbReference type="SAM" id="MobiDB-lite"/>
    </source>
</evidence>
<proteinExistence type="evidence at transcript level"/>
<accession>Q6P3P1</accession>
<reference key="1">
    <citation type="submission" date="2003-12" db="EMBL/GenBank/DDBJ databases">
        <authorList>
            <consortium name="NIH - Xenopus Gene Collection (XGC) project"/>
        </authorList>
    </citation>
    <scope>NUCLEOTIDE SEQUENCE [LARGE SCALE MRNA]</scope>
    <source>
        <tissue>Embryo</tissue>
    </source>
</reference>
<feature type="chain" id="PRO_0000234559" description="Tax1-binding protein 1 homolog">
    <location>
        <begin position="1"/>
        <end position="841"/>
    </location>
</feature>
<feature type="zinc finger region" description="UBZ1-type 1" evidence="3">
    <location>
        <begin position="779"/>
        <end position="805"/>
    </location>
</feature>
<feature type="zinc finger region" description="UBZ1-type 2" evidence="3">
    <location>
        <begin position="806"/>
        <end position="832"/>
    </location>
</feature>
<feature type="region of interest" description="Disordered" evidence="4">
    <location>
        <begin position="419"/>
        <end position="441"/>
    </location>
</feature>
<feature type="region of interest" description="Disordered" evidence="4">
    <location>
        <begin position="678"/>
        <end position="759"/>
    </location>
</feature>
<feature type="coiled-coil region" evidence="2">
    <location>
        <begin position="173"/>
        <end position="560"/>
    </location>
</feature>
<feature type="coiled-coil region" evidence="2">
    <location>
        <begin position="612"/>
        <end position="640"/>
    </location>
</feature>
<feature type="compositionally biased region" description="Basic and acidic residues" evidence="4">
    <location>
        <begin position="431"/>
        <end position="441"/>
    </location>
</feature>
<feature type="compositionally biased region" description="Acidic residues" evidence="4">
    <location>
        <begin position="741"/>
        <end position="751"/>
    </location>
</feature>
<feature type="binding site" evidence="3">
    <location>
        <position position="782"/>
    </location>
    <ligand>
        <name>Zn(2+)</name>
        <dbReference type="ChEBI" id="CHEBI:29105"/>
        <label>1</label>
    </ligand>
</feature>
<feature type="binding site" evidence="3">
    <location>
        <position position="785"/>
    </location>
    <ligand>
        <name>Zn(2+)</name>
        <dbReference type="ChEBI" id="CHEBI:29105"/>
        <label>1</label>
    </ligand>
</feature>
<feature type="binding site" evidence="3">
    <location>
        <position position="801"/>
    </location>
    <ligand>
        <name>Zn(2+)</name>
        <dbReference type="ChEBI" id="CHEBI:29105"/>
        <label>1</label>
    </ligand>
</feature>
<feature type="binding site" evidence="3">
    <location>
        <position position="805"/>
    </location>
    <ligand>
        <name>Zn(2+)</name>
        <dbReference type="ChEBI" id="CHEBI:29105"/>
        <label>1</label>
    </ligand>
</feature>
<feature type="binding site" evidence="3">
    <location>
        <position position="809"/>
    </location>
    <ligand>
        <name>Zn(2+)</name>
        <dbReference type="ChEBI" id="CHEBI:29105"/>
        <label>2</label>
    </ligand>
</feature>
<feature type="binding site" evidence="3">
    <location>
        <position position="812"/>
    </location>
    <ligand>
        <name>Zn(2+)</name>
        <dbReference type="ChEBI" id="CHEBI:29105"/>
        <label>2</label>
    </ligand>
</feature>
<feature type="binding site" evidence="3">
    <location>
        <position position="828"/>
    </location>
    <ligand>
        <name>Zn(2+)</name>
        <dbReference type="ChEBI" id="CHEBI:29105"/>
        <label>2</label>
    </ligand>
</feature>
<feature type="binding site" evidence="3">
    <location>
        <position position="832"/>
    </location>
    <ligand>
        <name>Zn(2+)</name>
        <dbReference type="ChEBI" id="CHEBI:29105"/>
        <label>2</label>
    </ligand>
</feature>